<gene>
    <name evidence="1" type="primary">clcA</name>
    <name evidence="1" type="synonym">eriC</name>
    <name type="ordered locus">UTI89_C0171</name>
</gene>
<evidence type="ECO:0000255" key="1">
    <source>
        <dbReference type="HAMAP-Rule" id="MF_01128"/>
    </source>
</evidence>
<protein>
    <recommendedName>
        <fullName evidence="1">H(+)/Cl(-) exchange transporter ClcA</fullName>
    </recommendedName>
</protein>
<reference key="1">
    <citation type="journal article" date="2006" name="Proc. Natl. Acad. Sci. U.S.A.">
        <title>Identification of genes subject to positive selection in uropathogenic strains of Escherichia coli: a comparative genomics approach.</title>
        <authorList>
            <person name="Chen S.L."/>
            <person name="Hung C.-S."/>
            <person name="Xu J."/>
            <person name="Reigstad C.S."/>
            <person name="Magrini V."/>
            <person name="Sabo A."/>
            <person name="Blasiar D."/>
            <person name="Bieri T."/>
            <person name="Meyer R.R."/>
            <person name="Ozersky P."/>
            <person name="Armstrong J.R."/>
            <person name="Fulton R.S."/>
            <person name="Latreille J.P."/>
            <person name="Spieth J."/>
            <person name="Hooton T.M."/>
            <person name="Mardis E.R."/>
            <person name="Hultgren S.J."/>
            <person name="Gordon J.I."/>
        </authorList>
    </citation>
    <scope>NUCLEOTIDE SEQUENCE [LARGE SCALE GENOMIC DNA]</scope>
    <source>
        <strain>UTI89 / UPEC</strain>
    </source>
</reference>
<name>CLCA_ECOUT</name>
<dbReference type="EMBL" id="CP000243">
    <property type="protein sequence ID" value="ABE05681.1"/>
    <property type="molecule type" value="Genomic_DNA"/>
</dbReference>
<dbReference type="RefSeq" id="WP_000845407.1">
    <property type="nucleotide sequence ID" value="NZ_CP064825.1"/>
</dbReference>
<dbReference type="SMR" id="Q1RG33"/>
<dbReference type="KEGG" id="eci:UTI89_C0171"/>
<dbReference type="HOGENOM" id="CLU_015263_7_0_6"/>
<dbReference type="Proteomes" id="UP000001952">
    <property type="component" value="Chromosome"/>
</dbReference>
<dbReference type="GO" id="GO:0005886">
    <property type="term" value="C:plasma membrane"/>
    <property type="evidence" value="ECO:0007669"/>
    <property type="project" value="UniProtKB-SubCell"/>
</dbReference>
<dbReference type="GO" id="GO:0015297">
    <property type="term" value="F:antiporter activity"/>
    <property type="evidence" value="ECO:0007669"/>
    <property type="project" value="UniProtKB-UniRule"/>
</dbReference>
<dbReference type="GO" id="GO:0005247">
    <property type="term" value="F:voltage-gated chloride channel activity"/>
    <property type="evidence" value="ECO:0007669"/>
    <property type="project" value="TreeGrafter"/>
</dbReference>
<dbReference type="CDD" id="cd01031">
    <property type="entry name" value="EriC"/>
    <property type="match status" value="1"/>
</dbReference>
<dbReference type="FunFam" id="1.10.3080.10:FF:000005">
    <property type="entry name" value="H(+)/Cl(-) exchange transporter ClcA"/>
    <property type="match status" value="1"/>
</dbReference>
<dbReference type="Gene3D" id="1.10.3080.10">
    <property type="entry name" value="Clc chloride channel"/>
    <property type="match status" value="1"/>
</dbReference>
<dbReference type="HAMAP" id="MF_01128">
    <property type="entry name" value="CLC_ClcA"/>
    <property type="match status" value="1"/>
</dbReference>
<dbReference type="InterPro" id="IPR023861">
    <property type="entry name" value="Cl-channel_ClcA"/>
</dbReference>
<dbReference type="InterPro" id="IPR014743">
    <property type="entry name" value="Cl-channel_core"/>
</dbReference>
<dbReference type="InterPro" id="IPR001807">
    <property type="entry name" value="ClC"/>
</dbReference>
<dbReference type="NCBIfam" id="NF003640">
    <property type="entry name" value="PRK05277.1"/>
    <property type="match status" value="1"/>
</dbReference>
<dbReference type="PANTHER" id="PTHR45711">
    <property type="entry name" value="CHLORIDE CHANNEL PROTEIN"/>
    <property type="match status" value="1"/>
</dbReference>
<dbReference type="PANTHER" id="PTHR45711:SF6">
    <property type="entry name" value="CHLORIDE CHANNEL PROTEIN"/>
    <property type="match status" value="1"/>
</dbReference>
<dbReference type="Pfam" id="PF00654">
    <property type="entry name" value="Voltage_CLC"/>
    <property type="match status" value="1"/>
</dbReference>
<dbReference type="PRINTS" id="PR00762">
    <property type="entry name" value="CLCHANNEL"/>
</dbReference>
<dbReference type="SUPFAM" id="SSF81340">
    <property type="entry name" value="Clc chloride channel"/>
    <property type="match status" value="1"/>
</dbReference>
<comment type="function">
    <text evidence="1">Proton-coupled chloride transporter. Functions as antiport system and exchanges two chloride ions for 1 proton. Probably acts as an electrical shunt for an outwardly-directed proton pump that is linked to amino acid decarboxylation, as part of the extreme acid resistance (XAR) response.</text>
</comment>
<comment type="catalytic activity">
    <reaction evidence="1">
        <text>2 chloride(in) + H(+)(out) = 2 chloride(out) + H(+)(in)</text>
        <dbReference type="Rhea" id="RHEA:29567"/>
        <dbReference type="ChEBI" id="CHEBI:15378"/>
        <dbReference type="ChEBI" id="CHEBI:17996"/>
    </reaction>
</comment>
<comment type="subunit">
    <text evidence="1">Homodimer.</text>
</comment>
<comment type="subcellular location">
    <subcellularLocation>
        <location evidence="1">Cell inner membrane</location>
        <topology evidence="1">Multi-pass membrane protein</topology>
    </subcellularLocation>
</comment>
<comment type="similarity">
    <text evidence="1">Belongs to the chloride channel (TC 2.A.49) family. ClcA subfamily.</text>
</comment>
<proteinExistence type="inferred from homology"/>
<accession>Q1RG33</accession>
<feature type="chain" id="PRO_0000301538" description="H(+)/Cl(-) exchange transporter ClcA">
    <location>
        <begin position="1"/>
        <end position="473"/>
    </location>
</feature>
<feature type="topological domain" description="Cytoplasmic" evidence="1">
    <location>
        <begin position="1"/>
        <end position="32"/>
    </location>
</feature>
<feature type="transmembrane region" description="Helical" evidence="1">
    <location>
        <begin position="33"/>
        <end position="69"/>
    </location>
</feature>
<feature type="topological domain" description="Periplasmic" evidence="1">
    <location>
        <begin position="70"/>
        <end position="76"/>
    </location>
</feature>
<feature type="transmembrane region" description="Helical" evidence="1">
    <location>
        <begin position="77"/>
        <end position="100"/>
    </location>
</feature>
<feature type="intramembrane region" description="Helical" evidence="1">
    <location>
        <begin position="109"/>
        <end position="116"/>
    </location>
</feature>
<feature type="topological domain" description="Cytoplasmic" evidence="1">
    <location>
        <begin position="117"/>
        <end position="123"/>
    </location>
</feature>
<feature type="transmembrane region" description="Helical" evidence="1">
    <location>
        <begin position="124"/>
        <end position="141"/>
    </location>
</feature>
<feature type="transmembrane region" description="Helical" evidence="1">
    <location>
        <begin position="148"/>
        <end position="166"/>
    </location>
</feature>
<feature type="topological domain" description="Cytoplasmic" evidence="1">
    <location>
        <begin position="167"/>
        <end position="176"/>
    </location>
</feature>
<feature type="intramembrane region" description="Helical" evidence="1">
    <location>
        <begin position="177"/>
        <end position="189"/>
    </location>
</feature>
<feature type="intramembrane region" description="Helical" evidence="1">
    <location>
        <begin position="193"/>
        <end position="201"/>
    </location>
</feature>
<feature type="topological domain" description="Cytoplasmic" evidence="1">
    <location>
        <begin position="202"/>
        <end position="214"/>
    </location>
</feature>
<feature type="transmembrane region" description="Helical" evidence="1">
    <location>
        <begin position="215"/>
        <end position="232"/>
    </location>
</feature>
<feature type="topological domain" description="Periplasmic" evidence="1">
    <location>
        <begin position="233"/>
        <end position="252"/>
    </location>
</feature>
<feature type="transmembrane region" description="Helical" evidence="1">
    <location>
        <begin position="253"/>
        <end position="281"/>
    </location>
</feature>
<feature type="topological domain" description="Cytoplasmic" evidence="1">
    <location>
        <begin position="282"/>
        <end position="287"/>
    </location>
</feature>
<feature type="transmembrane region" description="Helical" evidence="1">
    <location>
        <begin position="288"/>
        <end position="309"/>
    </location>
</feature>
<feature type="topological domain" description="Periplasmic" evidence="1">
    <location>
        <begin position="310"/>
        <end position="329"/>
    </location>
</feature>
<feature type="transmembrane region" description="Helical" evidence="1">
    <location>
        <begin position="330"/>
        <end position="349"/>
    </location>
</feature>
<feature type="transmembrane region" description="Helical" evidence="1">
    <location>
        <begin position="355"/>
        <end position="376"/>
    </location>
</feature>
<feature type="topological domain" description="Periplasmic" evidence="1">
    <location>
        <begin position="377"/>
        <end position="386"/>
    </location>
</feature>
<feature type="intramembrane region" description="Helical" evidence="1">
    <location>
        <begin position="387"/>
        <end position="401"/>
    </location>
</feature>
<feature type="intramembrane region" description="Note=Loop between two helices" evidence="1">
    <location>
        <begin position="402"/>
        <end position="404"/>
    </location>
</feature>
<feature type="intramembrane region" description="Helical" evidence="1">
    <location>
        <begin position="405"/>
        <end position="416"/>
    </location>
</feature>
<feature type="intramembrane region" description="Note=Loop between two helices" evidence="1">
    <location>
        <begin position="417"/>
        <end position="421"/>
    </location>
</feature>
<feature type="transmembrane region" description="Helical" evidence="1">
    <location>
        <begin position="422"/>
        <end position="438"/>
    </location>
</feature>
<feature type="topological domain" description="Cytoplasmic" evidence="1">
    <location>
        <begin position="439"/>
        <end position="473"/>
    </location>
</feature>
<feature type="short sequence motif" description="Selectivity filter part_1" evidence="1">
    <location>
        <begin position="106"/>
        <end position="110"/>
    </location>
</feature>
<feature type="short sequence motif" description="Selectivity filter part_2" evidence="1">
    <location>
        <begin position="146"/>
        <end position="150"/>
    </location>
</feature>
<feature type="short sequence motif" description="Selectivity filter part_3" evidence="1">
    <location>
        <begin position="355"/>
        <end position="359"/>
    </location>
</feature>
<feature type="binding site" evidence="1">
    <location>
        <position position="107"/>
    </location>
    <ligand>
        <name>chloride</name>
        <dbReference type="ChEBI" id="CHEBI:17996"/>
    </ligand>
</feature>
<feature type="binding site" evidence="1">
    <location>
        <position position="356"/>
    </location>
    <ligand>
        <name>chloride</name>
        <dbReference type="ChEBI" id="CHEBI:17996"/>
    </ligand>
</feature>
<feature type="binding site" evidence="1">
    <location>
        <position position="357"/>
    </location>
    <ligand>
        <name>chloride</name>
        <dbReference type="ChEBI" id="CHEBI:17996"/>
    </ligand>
</feature>
<feature type="binding site" evidence="1">
    <location>
        <position position="445"/>
    </location>
    <ligand>
        <name>chloride</name>
        <dbReference type="ChEBI" id="CHEBI:17996"/>
    </ligand>
</feature>
<feature type="site" description="Mediates proton transfer from the outer aqueous phase to the interior of the protein; involved in linking H(+) and Cl(-) transport" evidence="1">
    <location>
        <position position="148"/>
    </location>
</feature>
<feature type="site" description="Mediates proton transfer from the protein to the inner aqueous phase" evidence="1">
    <location>
        <position position="203"/>
    </location>
</feature>
<sequence>MKTDTPSLETPQAARLRRRQLIRQLLERDKTPLAILFMAAVVGTLVGLAAVAFDKGVAWLQNQRMGALVHTADNYPLLLTVAFLCSAVLAMFGYFLVRKYAPEAGGSGIPEIEGALEDQRPVRWWRVLPVKFFGGLGTLGGGMVLGREGPTVQIGGNIGRMVLDVFRLKGDEARHTLLATGAAAGLAAAFNAPLAGILFIIEEMRPQFRYTLISIKAVFIGVIMSTIMYRIFNHEVALIDVGKLSDAPLNTLWLYLILGIIFGIFGPIFNKWVLGMQDLLHRVHGGNITKWVLMGGAIGGLCGLLGFVAPATSGGGFNLIPIATAGNFSMGMLVFIFVARVITTLLCFSSGAPGGIFAPMLALGTVLGTAFGMVAVELFPQYHLEAGTFAIAGMGALLAASIRAPLTGIILVLEMTDNYQLILPMIITGLGATLLAQFTGGKPLYSAILARTLAKQEAEQLARSKAASARENT</sequence>
<keyword id="KW-0050">Antiport</keyword>
<keyword id="KW-0997">Cell inner membrane</keyword>
<keyword id="KW-1003">Cell membrane</keyword>
<keyword id="KW-0868">Chloride</keyword>
<keyword id="KW-0406">Ion transport</keyword>
<keyword id="KW-0472">Membrane</keyword>
<keyword id="KW-0812">Transmembrane</keyword>
<keyword id="KW-1133">Transmembrane helix</keyword>
<keyword id="KW-0813">Transport</keyword>
<organism>
    <name type="scientific">Escherichia coli (strain UTI89 / UPEC)</name>
    <dbReference type="NCBI Taxonomy" id="364106"/>
    <lineage>
        <taxon>Bacteria</taxon>
        <taxon>Pseudomonadati</taxon>
        <taxon>Pseudomonadota</taxon>
        <taxon>Gammaproteobacteria</taxon>
        <taxon>Enterobacterales</taxon>
        <taxon>Enterobacteriaceae</taxon>
        <taxon>Escherichia</taxon>
    </lineage>
</organism>